<keyword id="KW-0007">Acetylation</keyword>
<keyword id="KW-0158">Chromosome</keyword>
<keyword id="KW-0238">DNA-binding</keyword>
<keyword id="KW-1017">Isopeptide bond</keyword>
<keyword id="KW-0544">Nucleosome core</keyword>
<keyword id="KW-0539">Nucleus</keyword>
<keyword id="KW-1185">Reference proteome</keyword>
<keyword id="KW-0832">Ubl conjugation</keyword>
<dbReference type="EMBL" id="AP003231">
    <property type="protein sequence ID" value="BAB67889.1"/>
    <property type="molecule type" value="Genomic_DNA"/>
</dbReference>
<dbReference type="EMBL" id="AP003241">
    <property type="protein sequence ID" value="BAB93209.1"/>
    <property type="molecule type" value="Genomic_DNA"/>
</dbReference>
<dbReference type="EMBL" id="AP008207">
    <property type="protein sequence ID" value="BAF06668.1"/>
    <property type="molecule type" value="Genomic_DNA"/>
</dbReference>
<dbReference type="EMBL" id="AP014957">
    <property type="protein sequence ID" value="BAS75144.1"/>
    <property type="molecule type" value="Genomic_DNA"/>
</dbReference>
<dbReference type="EMBL" id="CM000138">
    <property type="protein sequence ID" value="EAZ14097.1"/>
    <property type="molecule type" value="Genomic_DNA"/>
</dbReference>
<dbReference type="RefSeq" id="XP_015612788.1">
    <property type="nucleotide sequence ID" value="XM_015757302.1"/>
</dbReference>
<dbReference type="SMR" id="Q943L2"/>
<dbReference type="FunCoup" id="Q943L2">
    <property type="interactions" value="1554"/>
</dbReference>
<dbReference type="STRING" id="39947.Q943L2"/>
<dbReference type="PaxDb" id="39947-Q943L2"/>
<dbReference type="EnsemblPlants" id="Os01t0839500-00">
    <property type="protein sequence ID" value="Os01t0839500-00"/>
    <property type="gene ID" value="Os01g0839500"/>
</dbReference>
<dbReference type="Gramene" id="Os01t0839500-00">
    <property type="protein sequence ID" value="Os01t0839500-00"/>
    <property type="gene ID" value="Os01g0839500"/>
</dbReference>
<dbReference type="KEGG" id="dosa:Os01g0839500"/>
<dbReference type="eggNOG" id="KOG1744">
    <property type="taxonomic scope" value="Eukaryota"/>
</dbReference>
<dbReference type="HOGENOM" id="CLU_075666_1_0_1"/>
<dbReference type="InParanoid" id="Q943L2"/>
<dbReference type="OMA" id="LLXGELA"/>
<dbReference type="OrthoDB" id="1914959at2759"/>
<dbReference type="Proteomes" id="UP000000763">
    <property type="component" value="Chromosome 1"/>
</dbReference>
<dbReference type="Proteomes" id="UP000007752">
    <property type="component" value="Chromosome 1"/>
</dbReference>
<dbReference type="Proteomes" id="UP000059680">
    <property type="component" value="Chromosome 1"/>
</dbReference>
<dbReference type="GO" id="GO:0000786">
    <property type="term" value="C:nucleosome"/>
    <property type="evidence" value="ECO:0007669"/>
    <property type="project" value="UniProtKB-KW"/>
</dbReference>
<dbReference type="GO" id="GO:0005634">
    <property type="term" value="C:nucleus"/>
    <property type="evidence" value="ECO:0007669"/>
    <property type="project" value="UniProtKB-SubCell"/>
</dbReference>
<dbReference type="GO" id="GO:0003677">
    <property type="term" value="F:DNA binding"/>
    <property type="evidence" value="ECO:0000318"/>
    <property type="project" value="GO_Central"/>
</dbReference>
<dbReference type="GO" id="GO:0046982">
    <property type="term" value="F:protein heterodimerization activity"/>
    <property type="evidence" value="ECO:0007669"/>
    <property type="project" value="InterPro"/>
</dbReference>
<dbReference type="GO" id="GO:0030527">
    <property type="term" value="F:structural constituent of chromatin"/>
    <property type="evidence" value="ECO:0007669"/>
    <property type="project" value="InterPro"/>
</dbReference>
<dbReference type="CDD" id="cd22910">
    <property type="entry name" value="HFD_H2B"/>
    <property type="match status" value="1"/>
</dbReference>
<dbReference type="FunFam" id="1.10.20.10:FF:000014">
    <property type="entry name" value="Histone H2B"/>
    <property type="match status" value="1"/>
</dbReference>
<dbReference type="Gene3D" id="1.10.20.10">
    <property type="entry name" value="Histone, subunit A"/>
    <property type="match status" value="1"/>
</dbReference>
<dbReference type="InterPro" id="IPR009072">
    <property type="entry name" value="Histone-fold"/>
</dbReference>
<dbReference type="InterPro" id="IPR007125">
    <property type="entry name" value="Histone_H2A/H2B/H3"/>
</dbReference>
<dbReference type="InterPro" id="IPR000558">
    <property type="entry name" value="Histone_H2B"/>
</dbReference>
<dbReference type="InterPro" id="IPR055333">
    <property type="entry name" value="HISTONE_H2B_site"/>
</dbReference>
<dbReference type="PANTHER" id="PTHR23428">
    <property type="entry name" value="HISTONE H2B"/>
    <property type="match status" value="1"/>
</dbReference>
<dbReference type="Pfam" id="PF00125">
    <property type="entry name" value="Histone"/>
    <property type="match status" value="1"/>
</dbReference>
<dbReference type="PRINTS" id="PR00621">
    <property type="entry name" value="HISTONEH2B"/>
</dbReference>
<dbReference type="SMART" id="SM00427">
    <property type="entry name" value="H2B"/>
    <property type="match status" value="1"/>
</dbReference>
<dbReference type="SUPFAM" id="SSF47113">
    <property type="entry name" value="Histone-fold"/>
    <property type="match status" value="1"/>
</dbReference>
<dbReference type="PROSITE" id="PS00357">
    <property type="entry name" value="HISTONE_H2B"/>
    <property type="match status" value="1"/>
</dbReference>
<name>H2B11_ORYSJ</name>
<feature type="initiator methionine" description="Removed" evidence="1">
    <location>
        <position position="1"/>
    </location>
</feature>
<feature type="chain" id="PRO_0000294198" description="Histone H2B.11">
    <location>
        <begin position="2"/>
        <end position="139"/>
    </location>
</feature>
<feature type="region of interest" description="Disordered" evidence="2">
    <location>
        <begin position="1"/>
        <end position="47"/>
    </location>
</feature>
<feature type="compositionally biased region" description="Basic and acidic residues" evidence="2">
    <location>
        <begin position="1"/>
        <end position="39"/>
    </location>
</feature>
<feature type="modified residue" description="N6-acetyllysine" evidence="1">
    <location>
        <position position="7"/>
    </location>
</feature>
<feature type="modified residue" description="N6-acetyllysine" evidence="1">
    <location>
        <position position="27"/>
    </location>
</feature>
<feature type="cross-link" description="Glycyl lysine isopeptide (Lys-Gly) (interchain with G-Cter in ubiquitin)" evidence="1">
    <location>
        <position position="135"/>
    </location>
</feature>
<gene>
    <name type="primary">H2B.11</name>
    <name type="ordered locus">Os01g0839500</name>
    <name type="ordered locus">LOC_Os01g62230</name>
    <name type="ORF">OsJ_003922</name>
    <name type="ORF">P0031D11.32</name>
    <name type="ORF">P0408C03.7</name>
</gene>
<sequence length="139" mass="15366">MAPKAEKKPAEKKPVEEKAEKKPKAEKRVPGAKEGGGEKKGKKKAKKSVETYKIYIFKVLKQVHPDIGISSKAMSIMNSFINDIFEKLAQEAARLARYNKKPTITSREIQTSVRLVLPGELAKHAVSEGTKAVTKFTSS</sequence>
<comment type="function">
    <text>Core component of nucleosome. Nucleosomes wrap and compact DNA into chromatin, limiting DNA accessibility to the cellular machineries which require DNA as a template. Histones thereby play a central role in transcription regulation, DNA repair, DNA replication and chromosomal stability. DNA accessibility is regulated via a complex set of post-translational modifications of histones, also called histone code, and nucleosome remodeling.</text>
</comment>
<comment type="subunit">
    <text>The nucleosome is a histone octamer containing two molecules each of H2A, H2B, H3 and H4 assembled in one H3-H4 heterotetramer and two H2A-H2B heterodimers. The octamer wraps approximately 147 bp of DNA.</text>
</comment>
<comment type="subcellular location">
    <subcellularLocation>
        <location evidence="1">Nucleus</location>
    </subcellularLocation>
    <subcellularLocation>
        <location evidence="1">Chromosome</location>
    </subcellularLocation>
</comment>
<comment type="PTM">
    <text evidence="1">Can be acetylated to form H2BK6ac and H2BK33ac.</text>
</comment>
<comment type="PTM">
    <text evidence="1">Monoubiquitinated by BRE1 to form H2BK143ub1 and deubiquitinated by UBP26. Required for heterochromatic histone H3 di- and trimethylation at H3K4me. May give a specific tag for epigenetic transcriptional activation (By similarity).</text>
</comment>
<comment type="similarity">
    <text evidence="3">Belongs to the histone H2B family.</text>
</comment>
<comment type="caution">
    <text evidence="3">To ensure consistency between histone entries, we follow the 'Brno' nomenclature for histone modifications, with positions referring to those used in the literature for the 'closest' model organism. Due to slight variations in histone sequences between organisms and to the presence of initiator methionine in UniProtKB/Swiss-Prot sequences, the actual positions of modified amino acids in the sequence generally differ. In this entry the following conventions are used: H2BK6ac = acetylated Lys-7; H2BK33ac = acetylated Lys-27; H2BK143ub1 = monoubiquitinated Lys-135.</text>
</comment>
<proteinExistence type="inferred from homology"/>
<evidence type="ECO:0000250" key="1"/>
<evidence type="ECO:0000256" key="2">
    <source>
        <dbReference type="SAM" id="MobiDB-lite"/>
    </source>
</evidence>
<evidence type="ECO:0000305" key="3"/>
<accession>Q943L2</accession>
<accession>A0A0P0VA45</accession>
<organism>
    <name type="scientific">Oryza sativa subsp. japonica</name>
    <name type="common">Rice</name>
    <dbReference type="NCBI Taxonomy" id="39947"/>
    <lineage>
        <taxon>Eukaryota</taxon>
        <taxon>Viridiplantae</taxon>
        <taxon>Streptophyta</taxon>
        <taxon>Embryophyta</taxon>
        <taxon>Tracheophyta</taxon>
        <taxon>Spermatophyta</taxon>
        <taxon>Magnoliopsida</taxon>
        <taxon>Liliopsida</taxon>
        <taxon>Poales</taxon>
        <taxon>Poaceae</taxon>
        <taxon>BOP clade</taxon>
        <taxon>Oryzoideae</taxon>
        <taxon>Oryzeae</taxon>
        <taxon>Oryzinae</taxon>
        <taxon>Oryza</taxon>
        <taxon>Oryza sativa</taxon>
    </lineage>
</organism>
<reference key="1">
    <citation type="journal article" date="2002" name="Nature">
        <title>The genome sequence and structure of rice chromosome 1.</title>
        <authorList>
            <person name="Sasaki T."/>
            <person name="Matsumoto T."/>
            <person name="Yamamoto K."/>
            <person name="Sakata K."/>
            <person name="Baba T."/>
            <person name="Katayose Y."/>
            <person name="Wu J."/>
            <person name="Niimura Y."/>
            <person name="Cheng Z."/>
            <person name="Nagamura Y."/>
            <person name="Antonio B.A."/>
            <person name="Kanamori H."/>
            <person name="Hosokawa S."/>
            <person name="Masukawa M."/>
            <person name="Arikawa K."/>
            <person name="Chiden Y."/>
            <person name="Hayashi M."/>
            <person name="Okamoto M."/>
            <person name="Ando T."/>
            <person name="Aoki H."/>
            <person name="Arita K."/>
            <person name="Hamada M."/>
            <person name="Harada C."/>
            <person name="Hijishita S."/>
            <person name="Honda M."/>
            <person name="Ichikawa Y."/>
            <person name="Idonuma A."/>
            <person name="Iijima M."/>
            <person name="Ikeda M."/>
            <person name="Ikeno M."/>
            <person name="Ito S."/>
            <person name="Ito T."/>
            <person name="Ito Y."/>
            <person name="Ito Y."/>
            <person name="Iwabuchi A."/>
            <person name="Kamiya K."/>
            <person name="Karasawa W."/>
            <person name="Katagiri S."/>
            <person name="Kikuta A."/>
            <person name="Kobayashi N."/>
            <person name="Kono I."/>
            <person name="Machita K."/>
            <person name="Maehara T."/>
            <person name="Mizuno H."/>
            <person name="Mizubayashi T."/>
            <person name="Mukai Y."/>
            <person name="Nagasaki H."/>
            <person name="Nakashima M."/>
            <person name="Nakama Y."/>
            <person name="Nakamichi Y."/>
            <person name="Nakamura M."/>
            <person name="Namiki N."/>
            <person name="Negishi M."/>
            <person name="Ohta I."/>
            <person name="Ono N."/>
            <person name="Saji S."/>
            <person name="Sakai K."/>
            <person name="Shibata M."/>
            <person name="Shimokawa T."/>
            <person name="Shomura A."/>
            <person name="Song J."/>
            <person name="Takazaki Y."/>
            <person name="Terasawa K."/>
            <person name="Tsuji K."/>
            <person name="Waki K."/>
            <person name="Yamagata H."/>
            <person name="Yamane H."/>
            <person name="Yoshiki S."/>
            <person name="Yoshihara R."/>
            <person name="Yukawa K."/>
            <person name="Zhong H."/>
            <person name="Iwama H."/>
            <person name="Endo T."/>
            <person name="Ito H."/>
            <person name="Hahn J.H."/>
            <person name="Kim H.-I."/>
            <person name="Eun M.-Y."/>
            <person name="Yano M."/>
            <person name="Jiang J."/>
            <person name="Gojobori T."/>
        </authorList>
    </citation>
    <scope>NUCLEOTIDE SEQUENCE [LARGE SCALE GENOMIC DNA]</scope>
    <source>
        <strain>cv. Nipponbare</strain>
    </source>
</reference>
<reference key="2">
    <citation type="journal article" date="2005" name="Nature">
        <title>The map-based sequence of the rice genome.</title>
        <authorList>
            <consortium name="International rice genome sequencing project (IRGSP)"/>
        </authorList>
    </citation>
    <scope>NUCLEOTIDE SEQUENCE [LARGE SCALE GENOMIC DNA]</scope>
    <source>
        <strain>cv. Nipponbare</strain>
    </source>
</reference>
<reference key="3">
    <citation type="journal article" date="2008" name="Nucleic Acids Res.">
        <title>The rice annotation project database (RAP-DB): 2008 update.</title>
        <authorList>
            <consortium name="The rice annotation project (RAP)"/>
        </authorList>
    </citation>
    <scope>GENOME REANNOTATION</scope>
    <source>
        <strain>cv. Nipponbare</strain>
    </source>
</reference>
<reference key="4">
    <citation type="journal article" date="2013" name="Rice">
        <title>Improvement of the Oryza sativa Nipponbare reference genome using next generation sequence and optical map data.</title>
        <authorList>
            <person name="Kawahara Y."/>
            <person name="de la Bastide M."/>
            <person name="Hamilton J.P."/>
            <person name="Kanamori H."/>
            <person name="McCombie W.R."/>
            <person name="Ouyang S."/>
            <person name="Schwartz D.C."/>
            <person name="Tanaka T."/>
            <person name="Wu J."/>
            <person name="Zhou S."/>
            <person name="Childs K.L."/>
            <person name="Davidson R.M."/>
            <person name="Lin H."/>
            <person name="Quesada-Ocampo L."/>
            <person name="Vaillancourt B."/>
            <person name="Sakai H."/>
            <person name="Lee S.S."/>
            <person name="Kim J."/>
            <person name="Numa H."/>
            <person name="Itoh T."/>
            <person name="Buell C.R."/>
            <person name="Matsumoto T."/>
        </authorList>
    </citation>
    <scope>GENOME REANNOTATION</scope>
    <source>
        <strain>cv. Nipponbare</strain>
    </source>
</reference>
<reference key="5">
    <citation type="journal article" date="2005" name="PLoS Biol.">
        <title>The genomes of Oryza sativa: a history of duplications.</title>
        <authorList>
            <person name="Yu J."/>
            <person name="Wang J."/>
            <person name="Lin W."/>
            <person name="Li S."/>
            <person name="Li H."/>
            <person name="Zhou J."/>
            <person name="Ni P."/>
            <person name="Dong W."/>
            <person name="Hu S."/>
            <person name="Zeng C."/>
            <person name="Zhang J."/>
            <person name="Zhang Y."/>
            <person name="Li R."/>
            <person name="Xu Z."/>
            <person name="Li S."/>
            <person name="Li X."/>
            <person name="Zheng H."/>
            <person name="Cong L."/>
            <person name="Lin L."/>
            <person name="Yin J."/>
            <person name="Geng J."/>
            <person name="Li G."/>
            <person name="Shi J."/>
            <person name="Liu J."/>
            <person name="Lv H."/>
            <person name="Li J."/>
            <person name="Wang J."/>
            <person name="Deng Y."/>
            <person name="Ran L."/>
            <person name="Shi X."/>
            <person name="Wang X."/>
            <person name="Wu Q."/>
            <person name="Li C."/>
            <person name="Ren X."/>
            <person name="Wang J."/>
            <person name="Wang X."/>
            <person name="Li D."/>
            <person name="Liu D."/>
            <person name="Zhang X."/>
            <person name="Ji Z."/>
            <person name="Zhao W."/>
            <person name="Sun Y."/>
            <person name="Zhang Z."/>
            <person name="Bao J."/>
            <person name="Han Y."/>
            <person name="Dong L."/>
            <person name="Ji J."/>
            <person name="Chen P."/>
            <person name="Wu S."/>
            <person name="Liu J."/>
            <person name="Xiao Y."/>
            <person name="Bu D."/>
            <person name="Tan J."/>
            <person name="Yang L."/>
            <person name="Ye C."/>
            <person name="Zhang J."/>
            <person name="Xu J."/>
            <person name="Zhou Y."/>
            <person name="Yu Y."/>
            <person name="Zhang B."/>
            <person name="Zhuang S."/>
            <person name="Wei H."/>
            <person name="Liu B."/>
            <person name="Lei M."/>
            <person name="Yu H."/>
            <person name="Li Y."/>
            <person name="Xu H."/>
            <person name="Wei S."/>
            <person name="He X."/>
            <person name="Fang L."/>
            <person name="Zhang Z."/>
            <person name="Zhang Y."/>
            <person name="Huang X."/>
            <person name="Su Z."/>
            <person name="Tong W."/>
            <person name="Li J."/>
            <person name="Tong Z."/>
            <person name="Li S."/>
            <person name="Ye J."/>
            <person name="Wang L."/>
            <person name="Fang L."/>
            <person name="Lei T."/>
            <person name="Chen C.-S."/>
            <person name="Chen H.-C."/>
            <person name="Xu Z."/>
            <person name="Li H."/>
            <person name="Huang H."/>
            <person name="Zhang F."/>
            <person name="Xu H."/>
            <person name="Li N."/>
            <person name="Zhao C."/>
            <person name="Li S."/>
            <person name="Dong L."/>
            <person name="Huang Y."/>
            <person name="Li L."/>
            <person name="Xi Y."/>
            <person name="Qi Q."/>
            <person name="Li W."/>
            <person name="Zhang B."/>
            <person name="Hu W."/>
            <person name="Zhang Y."/>
            <person name="Tian X."/>
            <person name="Jiao Y."/>
            <person name="Liang X."/>
            <person name="Jin J."/>
            <person name="Gao L."/>
            <person name="Zheng W."/>
            <person name="Hao B."/>
            <person name="Liu S.-M."/>
            <person name="Wang W."/>
            <person name="Yuan L."/>
            <person name="Cao M."/>
            <person name="McDermott J."/>
            <person name="Samudrala R."/>
            <person name="Wang J."/>
            <person name="Wong G.K.-S."/>
            <person name="Yang H."/>
        </authorList>
    </citation>
    <scope>NUCLEOTIDE SEQUENCE [LARGE SCALE GENOMIC DNA]</scope>
    <source>
        <strain>cv. Nipponbare</strain>
    </source>
</reference>
<protein>
    <recommendedName>
        <fullName>Histone H2B.11</fullName>
    </recommendedName>
</protein>